<proteinExistence type="inferred from homology"/>
<protein>
    <recommendedName>
        <fullName evidence="1">Cell division protein CrgA</fullName>
    </recommendedName>
</protein>
<keyword id="KW-0131">Cell cycle</keyword>
<keyword id="KW-0132">Cell division</keyword>
<keyword id="KW-1003">Cell membrane</keyword>
<keyword id="KW-0472">Membrane</keyword>
<keyword id="KW-0812">Transmembrane</keyword>
<keyword id="KW-1133">Transmembrane helix</keyword>
<feature type="chain" id="PRO_1000051705" description="Cell division protein CrgA">
    <location>
        <begin position="1"/>
        <end position="94"/>
    </location>
</feature>
<feature type="transmembrane region" description="Helical" evidence="1">
    <location>
        <begin position="31"/>
        <end position="51"/>
    </location>
</feature>
<feature type="transmembrane region" description="Helical" evidence="1">
    <location>
        <begin position="71"/>
        <end position="91"/>
    </location>
</feature>
<gene>
    <name evidence="1" type="primary">crgA</name>
    <name type="ordered locus">Mkms_0020</name>
</gene>
<reference key="1">
    <citation type="submission" date="2006-12" db="EMBL/GenBank/DDBJ databases">
        <title>Complete sequence of chromosome of Mycobacterium sp. KMS.</title>
        <authorList>
            <consortium name="US DOE Joint Genome Institute"/>
            <person name="Copeland A."/>
            <person name="Lucas S."/>
            <person name="Lapidus A."/>
            <person name="Barry K."/>
            <person name="Detter J.C."/>
            <person name="Glavina del Rio T."/>
            <person name="Hammon N."/>
            <person name="Israni S."/>
            <person name="Dalin E."/>
            <person name="Tice H."/>
            <person name="Pitluck S."/>
            <person name="Kiss H."/>
            <person name="Brettin T."/>
            <person name="Bruce D."/>
            <person name="Han C."/>
            <person name="Tapia R."/>
            <person name="Gilna P."/>
            <person name="Schmutz J."/>
            <person name="Larimer F."/>
            <person name="Land M."/>
            <person name="Hauser L."/>
            <person name="Kyrpides N."/>
            <person name="Mikhailova N."/>
            <person name="Miller C.D."/>
            <person name="Richardson P."/>
        </authorList>
    </citation>
    <scope>NUCLEOTIDE SEQUENCE [LARGE SCALE GENOMIC DNA]</scope>
    <source>
        <strain>KMS</strain>
    </source>
</reference>
<comment type="function">
    <text evidence="1">Involved in cell division.</text>
</comment>
<comment type="subcellular location">
    <subcellularLocation>
        <location evidence="1">Cell membrane</location>
        <topology evidence="1">Multi-pass membrane protein</topology>
    </subcellularLocation>
</comment>
<comment type="similarity">
    <text evidence="1">Belongs to the CrgA family.</text>
</comment>
<dbReference type="EMBL" id="CP000518">
    <property type="protein sequence ID" value="ABL89239.1"/>
    <property type="molecule type" value="Genomic_DNA"/>
</dbReference>
<dbReference type="SMR" id="A1U8T1"/>
<dbReference type="STRING" id="189918.Mkms_0020"/>
<dbReference type="KEGG" id="mkm:Mkms_0020"/>
<dbReference type="HOGENOM" id="CLU_149126_2_0_11"/>
<dbReference type="OrthoDB" id="5189646at2"/>
<dbReference type="GO" id="GO:0005886">
    <property type="term" value="C:plasma membrane"/>
    <property type="evidence" value="ECO:0007669"/>
    <property type="project" value="UniProtKB-SubCell"/>
</dbReference>
<dbReference type="GO" id="GO:0051301">
    <property type="term" value="P:cell division"/>
    <property type="evidence" value="ECO:0007669"/>
    <property type="project" value="UniProtKB-UniRule"/>
</dbReference>
<dbReference type="HAMAP" id="MF_00631">
    <property type="entry name" value="CrgA"/>
    <property type="match status" value="1"/>
</dbReference>
<dbReference type="InterPro" id="IPR009619">
    <property type="entry name" value="CrgA"/>
</dbReference>
<dbReference type="NCBIfam" id="NF001194">
    <property type="entry name" value="PRK00159.1"/>
    <property type="match status" value="1"/>
</dbReference>
<dbReference type="Pfam" id="PF06781">
    <property type="entry name" value="CrgA"/>
    <property type="match status" value="1"/>
</dbReference>
<name>CRGA_MYCSK</name>
<sequence length="94" mass="10539">MPKSKVRKKNDFTISPVSRTPVKVKAGPSSVWFVALFVGLMLIGLIWLLVFQLAATNPVDAPGMLQWMADLGPWNYAIAFAFMITGLLLTMRWR</sequence>
<accession>A1U8T1</accession>
<organism>
    <name type="scientific">Mycobacterium sp. (strain KMS)</name>
    <dbReference type="NCBI Taxonomy" id="189918"/>
    <lineage>
        <taxon>Bacteria</taxon>
        <taxon>Bacillati</taxon>
        <taxon>Actinomycetota</taxon>
        <taxon>Actinomycetes</taxon>
        <taxon>Mycobacteriales</taxon>
        <taxon>Mycobacteriaceae</taxon>
        <taxon>Mycobacterium</taxon>
    </lineage>
</organism>
<evidence type="ECO:0000255" key="1">
    <source>
        <dbReference type="HAMAP-Rule" id="MF_00631"/>
    </source>
</evidence>